<evidence type="ECO:0000250" key="1"/>
<evidence type="ECO:0000255" key="2"/>
<evidence type="ECO:0000305" key="3"/>
<feature type="signal peptide" evidence="2">
    <location>
        <begin position="1"/>
        <end position="25"/>
    </location>
</feature>
<feature type="chain" id="PRO_0000024870" description="Probable pectate lyase 6">
    <location>
        <begin position="26"/>
        <end position="455"/>
    </location>
</feature>
<feature type="active site" evidence="2">
    <location>
        <position position="327"/>
    </location>
</feature>
<feature type="binding site" evidence="1">
    <location>
        <position position="247"/>
    </location>
    <ligand>
        <name>Ca(2+)</name>
        <dbReference type="ChEBI" id="CHEBI:29108"/>
    </ligand>
</feature>
<feature type="binding site" evidence="1">
    <location>
        <position position="271"/>
    </location>
    <ligand>
        <name>Ca(2+)</name>
        <dbReference type="ChEBI" id="CHEBI:29108"/>
    </ligand>
</feature>
<feature type="binding site" evidence="1">
    <location>
        <position position="275"/>
    </location>
    <ligand>
        <name>Ca(2+)</name>
        <dbReference type="ChEBI" id="CHEBI:29108"/>
    </ligand>
</feature>
<feature type="glycosylation site" description="N-linked (GlcNAc...) asparagine" evidence="2">
    <location>
        <position position="55"/>
    </location>
</feature>
<feature type="glycosylation site" description="N-linked (GlcNAc...) asparagine" evidence="2">
    <location>
        <position position="75"/>
    </location>
</feature>
<organism>
    <name type="scientific">Arabidopsis thaliana</name>
    <name type="common">Mouse-ear cress</name>
    <dbReference type="NCBI Taxonomy" id="3702"/>
    <lineage>
        <taxon>Eukaryota</taxon>
        <taxon>Viridiplantae</taxon>
        <taxon>Streptophyta</taxon>
        <taxon>Embryophyta</taxon>
        <taxon>Tracheophyta</taxon>
        <taxon>Spermatophyta</taxon>
        <taxon>Magnoliopsida</taxon>
        <taxon>eudicotyledons</taxon>
        <taxon>Gunneridae</taxon>
        <taxon>Pentapetalae</taxon>
        <taxon>rosids</taxon>
        <taxon>malvids</taxon>
        <taxon>Brassicales</taxon>
        <taxon>Brassicaceae</taxon>
        <taxon>Camelineae</taxon>
        <taxon>Arabidopsis</taxon>
    </lineage>
</organism>
<name>PLY6_ARATH</name>
<keyword id="KW-0106">Calcium</keyword>
<keyword id="KW-0325">Glycoprotein</keyword>
<keyword id="KW-0456">Lyase</keyword>
<keyword id="KW-0479">Metal-binding</keyword>
<keyword id="KW-1185">Reference proteome</keyword>
<keyword id="KW-0732">Signal</keyword>
<accession>O64510</accession>
<gene>
    <name type="ordered locus">At2g02720</name>
    <name type="ORF">T20F6.14</name>
</gene>
<dbReference type="EC" id="4.2.2.2"/>
<dbReference type="EMBL" id="AC002521">
    <property type="protein sequence ID" value="AAC05350.1"/>
    <property type="molecule type" value="Genomic_DNA"/>
</dbReference>
<dbReference type="EMBL" id="CP002685">
    <property type="protein sequence ID" value="AEC05615.1"/>
    <property type="molecule type" value="Genomic_DNA"/>
</dbReference>
<dbReference type="EMBL" id="BT005757">
    <property type="protein sequence ID" value="AAO64162.1"/>
    <property type="molecule type" value="mRNA"/>
</dbReference>
<dbReference type="PIR" id="T00856">
    <property type="entry name" value="T00856"/>
</dbReference>
<dbReference type="RefSeq" id="NP_178375.1">
    <property type="nucleotide sequence ID" value="NM_126327.4"/>
</dbReference>
<dbReference type="SMR" id="O64510"/>
<dbReference type="FunCoup" id="O64510">
    <property type="interactions" value="126"/>
</dbReference>
<dbReference type="STRING" id="3702.O64510"/>
<dbReference type="CAZy" id="PL1">
    <property type="family name" value="Polysaccharide Lyase Family 1"/>
</dbReference>
<dbReference type="GlyGen" id="O64510">
    <property type="glycosylation" value="2 sites"/>
</dbReference>
<dbReference type="PaxDb" id="3702-AT2G02720.1"/>
<dbReference type="ProteomicsDB" id="234929"/>
<dbReference type="EnsemblPlants" id="AT2G02720.1">
    <property type="protein sequence ID" value="AT2G02720.1"/>
    <property type="gene ID" value="AT2G02720"/>
</dbReference>
<dbReference type="GeneID" id="814801"/>
<dbReference type="Gramene" id="AT2G02720.1">
    <property type="protein sequence ID" value="AT2G02720.1"/>
    <property type="gene ID" value="AT2G02720"/>
</dbReference>
<dbReference type="KEGG" id="ath:AT2G02720"/>
<dbReference type="Araport" id="AT2G02720"/>
<dbReference type="TAIR" id="AT2G02720"/>
<dbReference type="eggNOG" id="ENOG502QQE2">
    <property type="taxonomic scope" value="Eukaryota"/>
</dbReference>
<dbReference type="HOGENOM" id="CLU_026608_2_1_1"/>
<dbReference type="InParanoid" id="O64510"/>
<dbReference type="OMA" id="WQSEKDY"/>
<dbReference type="PhylomeDB" id="O64510"/>
<dbReference type="BioCyc" id="ARA:AT2G02720-MONOMER"/>
<dbReference type="UniPathway" id="UPA00545">
    <property type="reaction ID" value="UER00824"/>
</dbReference>
<dbReference type="PRO" id="PR:O64510"/>
<dbReference type="Proteomes" id="UP000006548">
    <property type="component" value="Chromosome 2"/>
</dbReference>
<dbReference type="ExpressionAtlas" id="O64510">
    <property type="expression patterns" value="baseline and differential"/>
</dbReference>
<dbReference type="GO" id="GO:0046872">
    <property type="term" value="F:metal ion binding"/>
    <property type="evidence" value="ECO:0007669"/>
    <property type="project" value="UniProtKB-KW"/>
</dbReference>
<dbReference type="GO" id="GO:0030570">
    <property type="term" value="F:pectate lyase activity"/>
    <property type="evidence" value="ECO:0007669"/>
    <property type="project" value="UniProtKB-EC"/>
</dbReference>
<dbReference type="GO" id="GO:0045490">
    <property type="term" value="P:pectin catabolic process"/>
    <property type="evidence" value="ECO:0007669"/>
    <property type="project" value="UniProtKB-UniPathway"/>
</dbReference>
<dbReference type="Gene3D" id="2.160.20.10">
    <property type="entry name" value="Single-stranded right-handed beta-helix, Pectin lyase-like"/>
    <property type="match status" value="1"/>
</dbReference>
<dbReference type="InterPro" id="IPR018082">
    <property type="entry name" value="AmbAllergen"/>
</dbReference>
<dbReference type="InterPro" id="IPR002022">
    <property type="entry name" value="Pec_lyase"/>
</dbReference>
<dbReference type="InterPro" id="IPR007524">
    <property type="entry name" value="Pec_lyase_N"/>
</dbReference>
<dbReference type="InterPro" id="IPR012334">
    <property type="entry name" value="Pectin_lyas_fold"/>
</dbReference>
<dbReference type="InterPro" id="IPR011050">
    <property type="entry name" value="Pectin_lyase_fold/virulence"/>
</dbReference>
<dbReference type="InterPro" id="IPR045032">
    <property type="entry name" value="PEL"/>
</dbReference>
<dbReference type="PANTHER" id="PTHR31683">
    <property type="entry name" value="PECTATE LYASE 18-RELATED"/>
    <property type="match status" value="1"/>
</dbReference>
<dbReference type="PANTHER" id="PTHR31683:SF181">
    <property type="entry name" value="PECTATE LYASE 6-RELATED"/>
    <property type="match status" value="1"/>
</dbReference>
<dbReference type="Pfam" id="PF04431">
    <property type="entry name" value="Pec_lyase_N"/>
    <property type="match status" value="1"/>
</dbReference>
<dbReference type="Pfam" id="PF00544">
    <property type="entry name" value="Pectate_lyase_4"/>
    <property type="match status" value="1"/>
</dbReference>
<dbReference type="PRINTS" id="PR00807">
    <property type="entry name" value="AMBALLERGEN"/>
</dbReference>
<dbReference type="SMART" id="SM00656">
    <property type="entry name" value="Amb_all"/>
    <property type="match status" value="1"/>
</dbReference>
<dbReference type="SUPFAM" id="SSF51126">
    <property type="entry name" value="Pectin lyase-like"/>
    <property type="match status" value="1"/>
</dbReference>
<sequence>MVNLGSYVFVFVALSLTVVVPSVQAHIAEYDEYWTQRQTNALRETLESYDPNPENVTDHFNYHAALAMETTGIVNETRRDLRQVGRGKKTTRRGGRFESLNAIDKCWRGDKNWDKNRKKLADCVLGFGRKTTGGKNGPIYVVTDPSDNDLLKPKPGTIRHAVTRDRPLWIIFARSMIIKLQQELIITNDKTIDGRGAKIYITGGAGLTLQFVRNVIIHNIHIKQIKRGAGGLIIDSEQHFGLRTVSDGDGINIFGATNVWIDHVSMTDCSDGMIDAIMGSTAITISNSHFTDHDEVMLFGGTNKDVIDKKMQITVAFNHFGKRLKQRMPRVRFGLVHVVNNDYTHWEMYAIGGNMNPTIISQGNRFIAPPIEDSKQVTKREYTPYPEWKSWNWQSEKDYFLNGAYFVQSGKANAWSATPKNPIPRKFAIRPQPGTKVRRLTKDAGTLGCKPGKSC</sequence>
<protein>
    <recommendedName>
        <fullName>Probable pectate lyase 6</fullName>
        <ecNumber>4.2.2.2</ecNumber>
    </recommendedName>
</protein>
<reference key="1">
    <citation type="journal article" date="1999" name="Nature">
        <title>Sequence and analysis of chromosome 2 of the plant Arabidopsis thaliana.</title>
        <authorList>
            <person name="Lin X."/>
            <person name="Kaul S."/>
            <person name="Rounsley S.D."/>
            <person name="Shea T.P."/>
            <person name="Benito M.-I."/>
            <person name="Town C.D."/>
            <person name="Fujii C.Y."/>
            <person name="Mason T.M."/>
            <person name="Bowman C.L."/>
            <person name="Barnstead M.E."/>
            <person name="Feldblyum T.V."/>
            <person name="Buell C.R."/>
            <person name="Ketchum K.A."/>
            <person name="Lee J.J."/>
            <person name="Ronning C.M."/>
            <person name="Koo H.L."/>
            <person name="Moffat K.S."/>
            <person name="Cronin L.A."/>
            <person name="Shen M."/>
            <person name="Pai G."/>
            <person name="Van Aken S."/>
            <person name="Umayam L."/>
            <person name="Tallon L.J."/>
            <person name="Gill J.E."/>
            <person name="Adams M.D."/>
            <person name="Carrera A.J."/>
            <person name="Creasy T.H."/>
            <person name="Goodman H.M."/>
            <person name="Somerville C.R."/>
            <person name="Copenhaver G.P."/>
            <person name="Preuss D."/>
            <person name="Nierman W.C."/>
            <person name="White O."/>
            <person name="Eisen J.A."/>
            <person name="Salzberg S.L."/>
            <person name="Fraser C.M."/>
            <person name="Venter J.C."/>
        </authorList>
    </citation>
    <scope>NUCLEOTIDE SEQUENCE [LARGE SCALE GENOMIC DNA]</scope>
    <source>
        <strain>cv. Columbia</strain>
    </source>
</reference>
<reference key="2">
    <citation type="journal article" date="2017" name="Plant J.">
        <title>Araport11: a complete reannotation of the Arabidopsis thaliana reference genome.</title>
        <authorList>
            <person name="Cheng C.Y."/>
            <person name="Krishnakumar V."/>
            <person name="Chan A.P."/>
            <person name="Thibaud-Nissen F."/>
            <person name="Schobel S."/>
            <person name="Town C.D."/>
        </authorList>
    </citation>
    <scope>GENOME REANNOTATION</scope>
    <source>
        <strain>cv. Columbia</strain>
    </source>
</reference>
<reference key="3">
    <citation type="journal article" date="2003" name="Science">
        <title>Empirical analysis of transcriptional activity in the Arabidopsis genome.</title>
        <authorList>
            <person name="Yamada K."/>
            <person name="Lim J."/>
            <person name="Dale J.M."/>
            <person name="Chen H."/>
            <person name="Shinn P."/>
            <person name="Palm C.J."/>
            <person name="Southwick A.M."/>
            <person name="Wu H.C."/>
            <person name="Kim C.J."/>
            <person name="Nguyen M."/>
            <person name="Pham P.K."/>
            <person name="Cheuk R.F."/>
            <person name="Karlin-Newmann G."/>
            <person name="Liu S.X."/>
            <person name="Lam B."/>
            <person name="Sakano H."/>
            <person name="Wu T."/>
            <person name="Yu G."/>
            <person name="Miranda M."/>
            <person name="Quach H.L."/>
            <person name="Tripp M."/>
            <person name="Chang C.H."/>
            <person name="Lee J.M."/>
            <person name="Toriumi M.J."/>
            <person name="Chan M.M."/>
            <person name="Tang C.C."/>
            <person name="Onodera C.S."/>
            <person name="Deng J.M."/>
            <person name="Akiyama K."/>
            <person name="Ansari Y."/>
            <person name="Arakawa T."/>
            <person name="Banh J."/>
            <person name="Banno F."/>
            <person name="Bowser L."/>
            <person name="Brooks S.Y."/>
            <person name="Carninci P."/>
            <person name="Chao Q."/>
            <person name="Choy N."/>
            <person name="Enju A."/>
            <person name="Goldsmith A.D."/>
            <person name="Gurjal M."/>
            <person name="Hansen N.F."/>
            <person name="Hayashizaki Y."/>
            <person name="Johnson-Hopson C."/>
            <person name="Hsuan V.W."/>
            <person name="Iida K."/>
            <person name="Karnes M."/>
            <person name="Khan S."/>
            <person name="Koesema E."/>
            <person name="Ishida J."/>
            <person name="Jiang P.X."/>
            <person name="Jones T."/>
            <person name="Kawai J."/>
            <person name="Kamiya A."/>
            <person name="Meyers C."/>
            <person name="Nakajima M."/>
            <person name="Narusaka M."/>
            <person name="Seki M."/>
            <person name="Sakurai T."/>
            <person name="Satou M."/>
            <person name="Tamse R."/>
            <person name="Vaysberg M."/>
            <person name="Wallender E.K."/>
            <person name="Wong C."/>
            <person name="Yamamura Y."/>
            <person name="Yuan S."/>
            <person name="Shinozaki K."/>
            <person name="Davis R.W."/>
            <person name="Theologis A."/>
            <person name="Ecker J.R."/>
        </authorList>
    </citation>
    <scope>NUCLEOTIDE SEQUENCE [LARGE SCALE MRNA]</scope>
    <source>
        <strain>cv. Columbia</strain>
    </source>
</reference>
<comment type="catalytic activity">
    <reaction>
        <text>Eliminative cleavage of (1-&gt;4)-alpha-D-galacturonan to give oligosaccharides with 4-deoxy-alpha-D-galact-4-enuronosyl groups at their non-reducing ends.</text>
        <dbReference type="EC" id="4.2.2.2"/>
    </reaction>
</comment>
<comment type="cofactor">
    <cofactor evidence="1">
        <name>Ca(2+)</name>
        <dbReference type="ChEBI" id="CHEBI:29108"/>
    </cofactor>
    <text evidence="1">Binds 1 Ca(2+) ion. Required for its activity.</text>
</comment>
<comment type="pathway">
    <text>Glycan metabolism; pectin degradation; 2-dehydro-3-deoxy-D-gluconate from pectin: step 2/5.</text>
</comment>
<comment type="similarity">
    <text evidence="3">Belongs to the polysaccharide lyase 1 family.</text>
</comment>
<proteinExistence type="evidence at transcript level"/>